<name>YT001_HUMAN</name>
<sequence>MESPKCLYSRITVNTAFGTKFSHISFIILFKVFLFPRITISKKTKLVTLSNYLNK</sequence>
<reference key="1">
    <citation type="submission" date="1998-09" db="EMBL/GenBank/DDBJ databases">
        <title>Functional prediction of the coding sequences of 50 new genes deduced by analysis of cDNA clones from human fetal liver.</title>
        <authorList>
            <person name="Yu Y."/>
            <person name="Zhang C."/>
            <person name="Luo L."/>
            <person name="Ouyang S."/>
            <person name="Zhang S."/>
            <person name="Li W."/>
            <person name="Wu J."/>
            <person name="Zhou S."/>
            <person name="Liu M."/>
            <person name="He F."/>
        </authorList>
    </citation>
    <scope>NUCLEOTIDE SEQUENCE [LARGE SCALE MRNA]</scope>
    <source>
        <tissue>Fetal liver</tissue>
    </source>
</reference>
<reference key="2">
    <citation type="journal article" date="2001" name="Nature">
        <title>The DNA sequence and comparative analysis of human chromosome 20.</title>
        <authorList>
            <person name="Deloukas P."/>
            <person name="Matthews L.H."/>
            <person name="Ashurst J.L."/>
            <person name="Burton J."/>
            <person name="Gilbert J.G.R."/>
            <person name="Jones M."/>
            <person name="Stavrides G."/>
            <person name="Almeida J.P."/>
            <person name="Babbage A.K."/>
            <person name="Bagguley C.L."/>
            <person name="Bailey J."/>
            <person name="Barlow K.F."/>
            <person name="Bates K.N."/>
            <person name="Beard L.M."/>
            <person name="Beare D.M."/>
            <person name="Beasley O.P."/>
            <person name="Bird C.P."/>
            <person name="Blakey S.E."/>
            <person name="Bridgeman A.M."/>
            <person name="Brown A.J."/>
            <person name="Buck D."/>
            <person name="Burrill W.D."/>
            <person name="Butler A.P."/>
            <person name="Carder C."/>
            <person name="Carter N.P."/>
            <person name="Chapman J.C."/>
            <person name="Clamp M."/>
            <person name="Clark G."/>
            <person name="Clark L.N."/>
            <person name="Clark S.Y."/>
            <person name="Clee C.M."/>
            <person name="Clegg S."/>
            <person name="Cobley V.E."/>
            <person name="Collier R.E."/>
            <person name="Connor R.E."/>
            <person name="Corby N.R."/>
            <person name="Coulson A."/>
            <person name="Coville G.J."/>
            <person name="Deadman R."/>
            <person name="Dhami P.D."/>
            <person name="Dunn M."/>
            <person name="Ellington A.G."/>
            <person name="Frankland J.A."/>
            <person name="Fraser A."/>
            <person name="French L."/>
            <person name="Garner P."/>
            <person name="Grafham D.V."/>
            <person name="Griffiths C."/>
            <person name="Griffiths M.N.D."/>
            <person name="Gwilliam R."/>
            <person name="Hall R.E."/>
            <person name="Hammond S."/>
            <person name="Harley J.L."/>
            <person name="Heath P.D."/>
            <person name="Ho S."/>
            <person name="Holden J.L."/>
            <person name="Howden P.J."/>
            <person name="Huckle E."/>
            <person name="Hunt A.R."/>
            <person name="Hunt S.E."/>
            <person name="Jekosch K."/>
            <person name="Johnson C.M."/>
            <person name="Johnson D."/>
            <person name="Kay M.P."/>
            <person name="Kimberley A.M."/>
            <person name="King A."/>
            <person name="Knights A."/>
            <person name="Laird G.K."/>
            <person name="Lawlor S."/>
            <person name="Lehvaeslaiho M.H."/>
            <person name="Leversha M.A."/>
            <person name="Lloyd C."/>
            <person name="Lloyd D.M."/>
            <person name="Lovell J.D."/>
            <person name="Marsh V.L."/>
            <person name="Martin S.L."/>
            <person name="McConnachie L.J."/>
            <person name="McLay K."/>
            <person name="McMurray A.A."/>
            <person name="Milne S.A."/>
            <person name="Mistry D."/>
            <person name="Moore M.J.F."/>
            <person name="Mullikin J.C."/>
            <person name="Nickerson T."/>
            <person name="Oliver K."/>
            <person name="Parker A."/>
            <person name="Patel R."/>
            <person name="Pearce T.A.V."/>
            <person name="Peck A.I."/>
            <person name="Phillimore B.J.C.T."/>
            <person name="Prathalingam S.R."/>
            <person name="Plumb R.W."/>
            <person name="Ramsay H."/>
            <person name="Rice C.M."/>
            <person name="Ross M.T."/>
            <person name="Scott C.E."/>
            <person name="Sehra H.K."/>
            <person name="Shownkeen R."/>
            <person name="Sims S."/>
            <person name="Skuce C.D."/>
            <person name="Smith M.L."/>
            <person name="Soderlund C."/>
            <person name="Steward C.A."/>
            <person name="Sulston J.E."/>
            <person name="Swann R.M."/>
            <person name="Sycamore N."/>
            <person name="Taylor R."/>
            <person name="Tee L."/>
            <person name="Thomas D.W."/>
            <person name="Thorpe A."/>
            <person name="Tracey A."/>
            <person name="Tromans A.C."/>
            <person name="Vaudin M."/>
            <person name="Wall M."/>
            <person name="Wallis J.M."/>
            <person name="Whitehead S.L."/>
            <person name="Whittaker P."/>
            <person name="Willey D.L."/>
            <person name="Williams L."/>
            <person name="Williams S.A."/>
            <person name="Wilming L."/>
            <person name="Wray P.W."/>
            <person name="Hubbard T."/>
            <person name="Durbin R.M."/>
            <person name="Bentley D.R."/>
            <person name="Beck S."/>
            <person name="Rogers J."/>
        </authorList>
    </citation>
    <scope>NUCLEOTIDE SEQUENCE [LARGE SCALE GENOMIC DNA]</scope>
</reference>
<protein>
    <recommendedName>
        <fullName>Putative uncharacterized protein PRO0628</fullName>
    </recommendedName>
</protein>
<keyword id="KW-1185">Reference proteome</keyword>
<evidence type="ECO:0000305" key="1"/>
<dbReference type="EMBL" id="AF090938">
    <property type="protein sequence ID" value="AAF24050.1"/>
    <property type="molecule type" value="mRNA"/>
</dbReference>
<dbReference type="EMBL" id="AL035652">
    <property type="status" value="NOT_ANNOTATED_CDS"/>
    <property type="molecule type" value="Genomic_DNA"/>
</dbReference>
<dbReference type="SMR" id="Q9UI54"/>
<dbReference type="BioMuta" id="PRO0628"/>
<dbReference type="REPRODUCTION-2DPAGE" id="Q9UI54"/>
<dbReference type="neXtProt" id="NX_Q9UI54"/>
<dbReference type="InParanoid" id="Q9UI54"/>
<dbReference type="PAN-GO" id="Q9UI54">
    <property type="GO annotations" value="0 GO annotations based on evolutionary models"/>
</dbReference>
<dbReference type="Pharos" id="Q9UI54">
    <property type="development level" value="Tdark"/>
</dbReference>
<dbReference type="Proteomes" id="UP000005640">
    <property type="component" value="Unplaced"/>
</dbReference>
<dbReference type="RNAct" id="Q9UI54">
    <property type="molecule type" value="protein"/>
</dbReference>
<accession>Q9UI54</accession>
<comment type="caution">
    <text evidence="1">Product of a dubious CDS prediction.</text>
</comment>
<gene>
    <name type="ORF">PRO0628</name>
</gene>
<proteinExistence type="uncertain"/>
<organism>
    <name type="scientific">Homo sapiens</name>
    <name type="common">Human</name>
    <dbReference type="NCBI Taxonomy" id="9606"/>
    <lineage>
        <taxon>Eukaryota</taxon>
        <taxon>Metazoa</taxon>
        <taxon>Chordata</taxon>
        <taxon>Craniata</taxon>
        <taxon>Vertebrata</taxon>
        <taxon>Euteleostomi</taxon>
        <taxon>Mammalia</taxon>
        <taxon>Eutheria</taxon>
        <taxon>Euarchontoglires</taxon>
        <taxon>Primates</taxon>
        <taxon>Haplorrhini</taxon>
        <taxon>Catarrhini</taxon>
        <taxon>Hominidae</taxon>
        <taxon>Homo</taxon>
    </lineage>
</organism>
<feature type="chain" id="PRO_0000058143" description="Putative uncharacterized protein PRO0628">
    <location>
        <begin position="1"/>
        <end position="55"/>
    </location>
</feature>